<comment type="function">
    <text evidence="1">Catalyzes the deamination of dCTP to dUTP.</text>
</comment>
<comment type="catalytic activity">
    <reaction evidence="1">
        <text>dCTP + H2O + H(+) = dUTP + NH4(+)</text>
        <dbReference type="Rhea" id="RHEA:22680"/>
        <dbReference type="ChEBI" id="CHEBI:15377"/>
        <dbReference type="ChEBI" id="CHEBI:15378"/>
        <dbReference type="ChEBI" id="CHEBI:28938"/>
        <dbReference type="ChEBI" id="CHEBI:61481"/>
        <dbReference type="ChEBI" id="CHEBI:61555"/>
        <dbReference type="EC" id="3.5.4.13"/>
    </reaction>
</comment>
<comment type="pathway">
    <text evidence="1">Pyrimidine metabolism; dUMP biosynthesis; dUMP from dCTP (dUTP route): step 1/2.</text>
</comment>
<comment type="subunit">
    <text evidence="1">Homotrimer.</text>
</comment>
<comment type="similarity">
    <text evidence="1">Belongs to the dCTP deaminase family.</text>
</comment>
<name>DCD_FRATT</name>
<accession>Q5NG61</accession>
<dbReference type="EC" id="3.5.4.13" evidence="1"/>
<dbReference type="EMBL" id="AJ749949">
    <property type="protein sequence ID" value="CAG45626.1"/>
    <property type="molecule type" value="Genomic_DNA"/>
</dbReference>
<dbReference type="RefSeq" id="WP_003016296.1">
    <property type="nucleotide sequence ID" value="NZ_CP010290.1"/>
</dbReference>
<dbReference type="RefSeq" id="YP_169981.1">
    <property type="nucleotide sequence ID" value="NC_006570.2"/>
</dbReference>
<dbReference type="SMR" id="Q5NG61"/>
<dbReference type="STRING" id="177416.FTT_0993c"/>
<dbReference type="DNASU" id="3191500"/>
<dbReference type="EnsemblBacteria" id="CAG45626">
    <property type="protein sequence ID" value="CAG45626"/>
    <property type="gene ID" value="FTT_0993c"/>
</dbReference>
<dbReference type="GeneID" id="75265387"/>
<dbReference type="KEGG" id="ftu:FTT_0993c"/>
<dbReference type="eggNOG" id="COG0717">
    <property type="taxonomic scope" value="Bacteria"/>
</dbReference>
<dbReference type="OrthoDB" id="9780956at2"/>
<dbReference type="UniPathway" id="UPA00610">
    <property type="reaction ID" value="UER00665"/>
</dbReference>
<dbReference type="Proteomes" id="UP000001174">
    <property type="component" value="Chromosome"/>
</dbReference>
<dbReference type="GO" id="GO:0008829">
    <property type="term" value="F:dCTP deaminase activity"/>
    <property type="evidence" value="ECO:0007669"/>
    <property type="project" value="UniProtKB-UniRule"/>
</dbReference>
<dbReference type="GO" id="GO:0000166">
    <property type="term" value="F:nucleotide binding"/>
    <property type="evidence" value="ECO:0007669"/>
    <property type="project" value="UniProtKB-KW"/>
</dbReference>
<dbReference type="GO" id="GO:0006226">
    <property type="term" value="P:dUMP biosynthetic process"/>
    <property type="evidence" value="ECO:0007669"/>
    <property type="project" value="UniProtKB-UniPathway"/>
</dbReference>
<dbReference type="GO" id="GO:0006229">
    <property type="term" value="P:dUTP biosynthetic process"/>
    <property type="evidence" value="ECO:0007669"/>
    <property type="project" value="UniProtKB-UniRule"/>
</dbReference>
<dbReference type="GO" id="GO:0015949">
    <property type="term" value="P:nucleobase-containing small molecule interconversion"/>
    <property type="evidence" value="ECO:0007669"/>
    <property type="project" value="TreeGrafter"/>
</dbReference>
<dbReference type="CDD" id="cd07557">
    <property type="entry name" value="trimeric_dUTPase"/>
    <property type="match status" value="1"/>
</dbReference>
<dbReference type="FunFam" id="2.70.40.10:FF:000001">
    <property type="entry name" value="dCTP deaminase"/>
    <property type="match status" value="1"/>
</dbReference>
<dbReference type="Gene3D" id="2.70.40.10">
    <property type="match status" value="1"/>
</dbReference>
<dbReference type="HAMAP" id="MF_00146">
    <property type="entry name" value="dCTP_deaminase"/>
    <property type="match status" value="1"/>
</dbReference>
<dbReference type="InterPro" id="IPR011962">
    <property type="entry name" value="dCTP_deaminase"/>
</dbReference>
<dbReference type="InterPro" id="IPR036157">
    <property type="entry name" value="dUTPase-like_sf"/>
</dbReference>
<dbReference type="InterPro" id="IPR033704">
    <property type="entry name" value="dUTPase_trimeric"/>
</dbReference>
<dbReference type="NCBIfam" id="TIGR02274">
    <property type="entry name" value="dCTP_deam"/>
    <property type="match status" value="1"/>
</dbReference>
<dbReference type="PANTHER" id="PTHR42680">
    <property type="entry name" value="DCTP DEAMINASE"/>
    <property type="match status" value="1"/>
</dbReference>
<dbReference type="PANTHER" id="PTHR42680:SF3">
    <property type="entry name" value="DCTP DEAMINASE"/>
    <property type="match status" value="1"/>
</dbReference>
<dbReference type="Pfam" id="PF22769">
    <property type="entry name" value="DCD"/>
    <property type="match status" value="1"/>
</dbReference>
<dbReference type="SUPFAM" id="SSF51283">
    <property type="entry name" value="dUTPase-like"/>
    <property type="match status" value="1"/>
</dbReference>
<protein>
    <recommendedName>
        <fullName evidence="1">dCTP deaminase</fullName>
        <ecNumber evidence="1">3.5.4.13</ecNumber>
    </recommendedName>
    <alternativeName>
        <fullName evidence="1">Deoxycytidine triphosphate deaminase</fullName>
    </alternativeName>
</protein>
<feature type="chain" id="PRO_1000009728" description="dCTP deaminase">
    <location>
        <begin position="1"/>
        <end position="188"/>
    </location>
</feature>
<feature type="active site" description="Proton donor/acceptor" evidence="1">
    <location>
        <position position="137"/>
    </location>
</feature>
<feature type="binding site" evidence="1">
    <location>
        <begin position="111"/>
        <end position="116"/>
    </location>
    <ligand>
        <name>dCTP</name>
        <dbReference type="ChEBI" id="CHEBI:61481"/>
    </ligand>
</feature>
<feature type="binding site" evidence="1">
    <location>
        <begin position="135"/>
        <end position="137"/>
    </location>
    <ligand>
        <name>dCTP</name>
        <dbReference type="ChEBI" id="CHEBI:61481"/>
    </ligand>
</feature>
<feature type="binding site" evidence="1">
    <location>
        <position position="156"/>
    </location>
    <ligand>
        <name>dCTP</name>
        <dbReference type="ChEBI" id="CHEBI:61481"/>
    </ligand>
</feature>
<feature type="binding site" evidence="1">
    <location>
        <position position="170"/>
    </location>
    <ligand>
        <name>dCTP</name>
        <dbReference type="ChEBI" id="CHEBI:61481"/>
    </ligand>
</feature>
<feature type="binding site" evidence="1">
    <location>
        <position position="180"/>
    </location>
    <ligand>
        <name>dCTP</name>
        <dbReference type="ChEBI" id="CHEBI:61481"/>
    </ligand>
</feature>
<organism>
    <name type="scientific">Francisella tularensis subsp. tularensis (strain SCHU S4 / Schu 4)</name>
    <dbReference type="NCBI Taxonomy" id="177416"/>
    <lineage>
        <taxon>Bacteria</taxon>
        <taxon>Pseudomonadati</taxon>
        <taxon>Pseudomonadota</taxon>
        <taxon>Gammaproteobacteria</taxon>
        <taxon>Thiotrichales</taxon>
        <taxon>Francisellaceae</taxon>
        <taxon>Francisella</taxon>
    </lineage>
</organism>
<evidence type="ECO:0000255" key="1">
    <source>
        <dbReference type="HAMAP-Rule" id="MF_00146"/>
    </source>
</evidence>
<sequence length="188" mass="21124">MTIKSDKWIKKMSQEHNMIEPFEAGQVKVINNQKIVSYGTSSYGYDVRCADEFKIFTNINSSIVDPKNFNDKNFVDFKGDVCIIPPNSFALARTVEKFKIPRDTLVVCLGKSTYARCGIIVNVTPLEPEWEGYVTLEFSNTTPLPAKIYANEGVAQMLFFQSDEECETSYADKGGKYQGQVGVTLPKC</sequence>
<keyword id="KW-0378">Hydrolase</keyword>
<keyword id="KW-0546">Nucleotide metabolism</keyword>
<keyword id="KW-0547">Nucleotide-binding</keyword>
<keyword id="KW-1185">Reference proteome</keyword>
<reference key="1">
    <citation type="journal article" date="2005" name="Nat. Genet.">
        <title>The complete genome sequence of Francisella tularensis, the causative agent of tularemia.</title>
        <authorList>
            <person name="Larsson P."/>
            <person name="Oyston P.C.F."/>
            <person name="Chain P."/>
            <person name="Chu M.C."/>
            <person name="Duffield M."/>
            <person name="Fuxelius H.-H."/>
            <person name="Garcia E."/>
            <person name="Haelltorp G."/>
            <person name="Johansson D."/>
            <person name="Isherwood K.E."/>
            <person name="Karp P.D."/>
            <person name="Larsson E."/>
            <person name="Liu Y."/>
            <person name="Michell S."/>
            <person name="Prior J."/>
            <person name="Prior R."/>
            <person name="Malfatti S."/>
            <person name="Sjoestedt A."/>
            <person name="Svensson K."/>
            <person name="Thompson N."/>
            <person name="Vergez L."/>
            <person name="Wagg J.K."/>
            <person name="Wren B.W."/>
            <person name="Lindler L.E."/>
            <person name="Andersson S.G.E."/>
            <person name="Forsman M."/>
            <person name="Titball R.W."/>
        </authorList>
    </citation>
    <scope>NUCLEOTIDE SEQUENCE [LARGE SCALE GENOMIC DNA]</scope>
    <source>
        <strain>SCHU S4 / Schu 4</strain>
    </source>
</reference>
<proteinExistence type="inferred from homology"/>
<gene>
    <name evidence="1" type="primary">dcd</name>
    <name type="ordered locus">FTT_0993c</name>
</gene>